<keyword id="KW-0067">ATP-binding</keyword>
<keyword id="KW-0963">Cytoplasm</keyword>
<keyword id="KW-0418">Kinase</keyword>
<keyword id="KW-0547">Nucleotide-binding</keyword>
<keyword id="KW-1185">Reference proteome</keyword>
<keyword id="KW-0808">Transferase</keyword>
<dbReference type="EC" id="2.7.4.8" evidence="1"/>
<dbReference type="EMBL" id="CP000302">
    <property type="protein sequence ID" value="ABE56708.1"/>
    <property type="molecule type" value="Genomic_DNA"/>
</dbReference>
<dbReference type="RefSeq" id="WP_011497850.1">
    <property type="nucleotide sequence ID" value="NC_007954.1"/>
</dbReference>
<dbReference type="SMR" id="Q12IL8"/>
<dbReference type="STRING" id="318161.Sden_3433"/>
<dbReference type="KEGG" id="sdn:Sden_3433"/>
<dbReference type="eggNOG" id="COG0194">
    <property type="taxonomic scope" value="Bacteria"/>
</dbReference>
<dbReference type="HOGENOM" id="CLU_001715_1_0_6"/>
<dbReference type="OrthoDB" id="9808150at2"/>
<dbReference type="Proteomes" id="UP000001982">
    <property type="component" value="Chromosome"/>
</dbReference>
<dbReference type="GO" id="GO:0005829">
    <property type="term" value="C:cytosol"/>
    <property type="evidence" value="ECO:0007669"/>
    <property type="project" value="TreeGrafter"/>
</dbReference>
<dbReference type="GO" id="GO:0005524">
    <property type="term" value="F:ATP binding"/>
    <property type="evidence" value="ECO:0007669"/>
    <property type="project" value="UniProtKB-UniRule"/>
</dbReference>
<dbReference type="GO" id="GO:0004385">
    <property type="term" value="F:guanylate kinase activity"/>
    <property type="evidence" value="ECO:0007669"/>
    <property type="project" value="UniProtKB-UniRule"/>
</dbReference>
<dbReference type="CDD" id="cd00071">
    <property type="entry name" value="GMPK"/>
    <property type="match status" value="1"/>
</dbReference>
<dbReference type="FunFam" id="3.40.50.300:FF:000084">
    <property type="entry name" value="Guanylate kinase"/>
    <property type="match status" value="1"/>
</dbReference>
<dbReference type="FunFam" id="3.30.63.10:FF:000002">
    <property type="entry name" value="Guanylate kinase 1"/>
    <property type="match status" value="1"/>
</dbReference>
<dbReference type="Gene3D" id="3.30.63.10">
    <property type="entry name" value="Guanylate Kinase phosphate binding domain"/>
    <property type="match status" value="1"/>
</dbReference>
<dbReference type="Gene3D" id="3.40.50.300">
    <property type="entry name" value="P-loop containing nucleotide triphosphate hydrolases"/>
    <property type="match status" value="1"/>
</dbReference>
<dbReference type="HAMAP" id="MF_00328">
    <property type="entry name" value="Guanylate_kinase"/>
    <property type="match status" value="1"/>
</dbReference>
<dbReference type="InterPro" id="IPR008145">
    <property type="entry name" value="GK/Ca_channel_bsu"/>
</dbReference>
<dbReference type="InterPro" id="IPR008144">
    <property type="entry name" value="Guanylate_kin-like_dom"/>
</dbReference>
<dbReference type="InterPro" id="IPR017665">
    <property type="entry name" value="Guanylate_kinase"/>
</dbReference>
<dbReference type="InterPro" id="IPR020590">
    <property type="entry name" value="Guanylate_kinase_CS"/>
</dbReference>
<dbReference type="InterPro" id="IPR027417">
    <property type="entry name" value="P-loop_NTPase"/>
</dbReference>
<dbReference type="NCBIfam" id="TIGR03263">
    <property type="entry name" value="guanyl_kin"/>
    <property type="match status" value="1"/>
</dbReference>
<dbReference type="PANTHER" id="PTHR23117:SF13">
    <property type="entry name" value="GUANYLATE KINASE"/>
    <property type="match status" value="1"/>
</dbReference>
<dbReference type="PANTHER" id="PTHR23117">
    <property type="entry name" value="GUANYLATE KINASE-RELATED"/>
    <property type="match status" value="1"/>
</dbReference>
<dbReference type="Pfam" id="PF00625">
    <property type="entry name" value="Guanylate_kin"/>
    <property type="match status" value="1"/>
</dbReference>
<dbReference type="SMART" id="SM00072">
    <property type="entry name" value="GuKc"/>
    <property type="match status" value="1"/>
</dbReference>
<dbReference type="SUPFAM" id="SSF52540">
    <property type="entry name" value="P-loop containing nucleoside triphosphate hydrolases"/>
    <property type="match status" value="1"/>
</dbReference>
<dbReference type="PROSITE" id="PS00856">
    <property type="entry name" value="GUANYLATE_KINASE_1"/>
    <property type="match status" value="1"/>
</dbReference>
<dbReference type="PROSITE" id="PS50052">
    <property type="entry name" value="GUANYLATE_KINASE_2"/>
    <property type="match status" value="1"/>
</dbReference>
<proteinExistence type="inferred from homology"/>
<organism>
    <name type="scientific">Shewanella denitrificans (strain OS217 / ATCC BAA-1090 / DSM 15013)</name>
    <dbReference type="NCBI Taxonomy" id="318161"/>
    <lineage>
        <taxon>Bacteria</taxon>
        <taxon>Pseudomonadati</taxon>
        <taxon>Pseudomonadota</taxon>
        <taxon>Gammaproteobacteria</taxon>
        <taxon>Alteromonadales</taxon>
        <taxon>Shewanellaceae</taxon>
        <taxon>Shewanella</taxon>
    </lineage>
</organism>
<feature type="chain" id="PRO_0000266396" description="Guanylate kinase">
    <location>
        <begin position="1"/>
        <end position="207"/>
    </location>
</feature>
<feature type="domain" description="Guanylate kinase-like" evidence="1">
    <location>
        <begin position="5"/>
        <end position="184"/>
    </location>
</feature>
<feature type="binding site" evidence="1">
    <location>
        <begin position="12"/>
        <end position="19"/>
    </location>
    <ligand>
        <name>ATP</name>
        <dbReference type="ChEBI" id="CHEBI:30616"/>
    </ligand>
</feature>
<reference key="1">
    <citation type="submission" date="2006-03" db="EMBL/GenBank/DDBJ databases">
        <title>Complete sequence of Shewanella denitrificans OS217.</title>
        <authorList>
            <consortium name="US DOE Joint Genome Institute"/>
            <person name="Copeland A."/>
            <person name="Lucas S."/>
            <person name="Lapidus A."/>
            <person name="Barry K."/>
            <person name="Detter J.C."/>
            <person name="Glavina del Rio T."/>
            <person name="Hammon N."/>
            <person name="Israni S."/>
            <person name="Dalin E."/>
            <person name="Tice H."/>
            <person name="Pitluck S."/>
            <person name="Brettin T."/>
            <person name="Bruce D."/>
            <person name="Han C."/>
            <person name="Tapia R."/>
            <person name="Gilna P."/>
            <person name="Kiss H."/>
            <person name="Schmutz J."/>
            <person name="Larimer F."/>
            <person name="Land M."/>
            <person name="Hauser L."/>
            <person name="Kyrpides N."/>
            <person name="Lykidis A."/>
            <person name="Richardson P."/>
        </authorList>
    </citation>
    <scope>NUCLEOTIDE SEQUENCE [LARGE SCALE GENOMIC DNA]</scope>
    <source>
        <strain>OS217 / ATCC BAA-1090 / DSM 15013</strain>
    </source>
</reference>
<sequence>MSARGNLFIVSAPSGAGKSSLITALLKDKPQDMQVSVSHTTRAPRPGEVDGQHYHFVSVEQFKALIAENAFFESAEVFGNFYGTSRQVIENTLSLGIDVFLDIDWQGAQQVKKIMPEAIGVFILPPSKAELERRLTGRGQDSSDVIAARMAQAVSEMSHYNEYDFVIINDDFEQALADLKSIIFSQRLTCASQFHTHNDMLVDLLAD</sequence>
<name>KGUA_SHEDO</name>
<evidence type="ECO:0000255" key="1">
    <source>
        <dbReference type="HAMAP-Rule" id="MF_00328"/>
    </source>
</evidence>
<accession>Q12IL8</accession>
<gene>
    <name evidence="1" type="primary">gmk</name>
    <name type="ordered locus">Sden_3433</name>
</gene>
<protein>
    <recommendedName>
        <fullName evidence="1">Guanylate kinase</fullName>
        <ecNumber evidence="1">2.7.4.8</ecNumber>
    </recommendedName>
    <alternativeName>
        <fullName evidence="1">GMP kinase</fullName>
    </alternativeName>
</protein>
<comment type="function">
    <text evidence="1">Essential for recycling GMP and indirectly, cGMP.</text>
</comment>
<comment type="catalytic activity">
    <reaction evidence="1">
        <text>GMP + ATP = GDP + ADP</text>
        <dbReference type="Rhea" id="RHEA:20780"/>
        <dbReference type="ChEBI" id="CHEBI:30616"/>
        <dbReference type="ChEBI" id="CHEBI:58115"/>
        <dbReference type="ChEBI" id="CHEBI:58189"/>
        <dbReference type="ChEBI" id="CHEBI:456216"/>
        <dbReference type="EC" id="2.7.4.8"/>
    </reaction>
</comment>
<comment type="subcellular location">
    <subcellularLocation>
        <location evidence="1">Cytoplasm</location>
    </subcellularLocation>
</comment>
<comment type="similarity">
    <text evidence="1">Belongs to the guanylate kinase family.</text>
</comment>